<name>DMRMT_AMYMS</name>
<accession>G0FUS0</accession>
<accession>O52570</accession>
<keyword id="KW-0045">Antibiotic biosynthesis</keyword>
<keyword id="KW-0489">Methyltransferase</keyword>
<keyword id="KW-0949">S-adenosyl-L-methionine</keyword>
<keyword id="KW-0808">Transferase</keyword>
<protein>
    <recommendedName>
        <fullName evidence="3">27-O-demethylrifamycin SV methyltransferase</fullName>
        <shortName evidence="3">DMRSV methyltransferase</shortName>
        <ecNumber evidence="2">2.1.1.315</ecNumber>
    </recommendedName>
</protein>
<proteinExistence type="evidence at protein level"/>
<evidence type="ECO:0000250" key="1">
    <source>
        <dbReference type="UniProtKB" id="Q8KZ94"/>
    </source>
</evidence>
<evidence type="ECO:0000269" key="2">
    <source>
    </source>
</evidence>
<evidence type="ECO:0000303" key="3">
    <source>
    </source>
</evidence>
<evidence type="ECO:0000305" key="4"/>
<evidence type="ECO:0000312" key="5">
    <source>
        <dbReference type="EMBL" id="AEK39156.1"/>
    </source>
</evidence>
<organism>
    <name type="scientific">Amycolatopsis mediterranei (strain S699)</name>
    <name type="common">Nocardia mediterranei</name>
    <dbReference type="NCBI Taxonomy" id="713604"/>
    <lineage>
        <taxon>Bacteria</taxon>
        <taxon>Bacillati</taxon>
        <taxon>Actinomycetota</taxon>
        <taxon>Actinomycetes</taxon>
        <taxon>Pseudonocardiales</taxon>
        <taxon>Pseudonocardiaceae</taxon>
        <taxon>Amycolatopsis</taxon>
    </lineage>
</organism>
<reference key="1">
    <citation type="journal article" date="1998" name="Chem. Biol.">
        <title>Biosynthesis of the ansamycin antibiotic rifamycin: deductions from the molecular analysis of the rif biosynthetic gene cluster of Amycolatopsis mediterranei S699.</title>
        <authorList>
            <person name="August P.R."/>
            <person name="Tang L."/>
            <person name="Yoon Y.J."/>
            <person name="Ning S."/>
            <person name="Mueller R."/>
            <person name="Yu T.W."/>
            <person name="Taylor M."/>
            <person name="Hoffmann D."/>
            <person name="Kim C.G."/>
            <person name="Zhang X."/>
            <person name="Hutchinson C.R."/>
            <person name="Floss H.G."/>
        </authorList>
    </citation>
    <scope>NUCLEOTIDE SEQUENCE [GENOMIC DNA]</scope>
    <source>
        <strain>S699</strain>
    </source>
</reference>
<reference key="2">
    <citation type="journal article" date="2011" name="J. Bacteriol.">
        <title>Whole genome sequence of the rifamycin B-producing strain Amycolatopsis mediterranei S699.</title>
        <authorList>
            <person name="Verma M."/>
            <person name="Kaur J."/>
            <person name="Kumar M."/>
            <person name="Kumari K."/>
            <person name="Saxena A."/>
            <person name="Anand S."/>
            <person name="Nigam A."/>
            <person name="Ravi V."/>
            <person name="Raghuvanshi S."/>
            <person name="Khurana P."/>
            <person name="Tyagi A.K."/>
            <person name="Khurana J.P."/>
            <person name="Lal R."/>
        </authorList>
    </citation>
    <scope>NUCLEOTIDE SEQUENCE [LARGE SCALE GENOMIC DNA]</scope>
    <source>
        <strain>S699</strain>
    </source>
</reference>
<reference key="3">
    <citation type="journal article" date="2003" name="Arch. Biochem. Biophys.">
        <title>Isolation and characterization of 27-O-demethylrifamycin SV methyltransferase provides new insights into the post-PKS modification steps during the biosynthesis of the antitubercular drug rifamycin B by Amycolatopsis mediterranei S699.</title>
        <authorList>
            <person name="Xu J."/>
            <person name="Mahmud T."/>
            <person name="Floss H.G."/>
        </authorList>
    </citation>
    <scope>FUNCTION</scope>
    <scope>CATALYTIC ACTIVITY</scope>
    <scope>ACTIVITY REGULATION</scope>
    <scope>BIOPHYSICOCHEMICAL PROPERTIES</scope>
    <scope>PATHWAY</scope>
    <scope>SUBUNIT</scope>
    <scope>DISRUPTION PHENOTYPE</scope>
    <source>
        <strain>S699</strain>
    </source>
</reference>
<sequence>MTKPTPNEIGKGYDAFADLLDQLWGENLHHGYWDDESATLEEATTRLTDRLAGMLPLRAGDRLLDIGCGNGEPAIRMATANDVMVTGISISEKQVERANDRAYKADVDDRVVFEYADAMELPYPDASFDVVWALESLHHMPDRWHVIRQAARVLRPGGRLALGDFLLVPSPAGLEADAERVREVGKGVVAVVSLDEYQAHLREAGLEPESAEDVSQYTRPSWTKAAERFEGLREQALQHIEAAQFEVTLGRFRAFSEEPSLGYVLLTARKPD</sequence>
<gene>
    <name evidence="5" type="ordered locus">RAM_03320</name>
</gene>
<dbReference type="EC" id="2.1.1.315" evidence="2"/>
<dbReference type="EMBL" id="AF040570">
    <property type="protein sequence ID" value="AAC01738.1"/>
    <property type="molecule type" value="Genomic_DNA"/>
</dbReference>
<dbReference type="EMBL" id="CP002896">
    <property type="protein sequence ID" value="AEK39156.1"/>
    <property type="molecule type" value="Genomic_DNA"/>
</dbReference>
<dbReference type="RefSeq" id="WP_013222580.1">
    <property type="nucleotide sequence ID" value="NC_018266.1"/>
</dbReference>
<dbReference type="SMR" id="G0FUS0"/>
<dbReference type="STRING" id="713604.RAM_03320"/>
<dbReference type="GeneID" id="92868452"/>
<dbReference type="KEGG" id="amm:AMES_0648"/>
<dbReference type="KEGG" id="amn:RAM_03320"/>
<dbReference type="PATRIC" id="fig|713604.12.peg.689"/>
<dbReference type="BioCyc" id="MetaCyc:MONOMER-14112"/>
<dbReference type="UniPathway" id="UPA01029"/>
<dbReference type="Proteomes" id="UP000006138">
    <property type="component" value="Chromosome"/>
</dbReference>
<dbReference type="GO" id="GO:0008757">
    <property type="term" value="F:S-adenosylmethionine-dependent methyltransferase activity"/>
    <property type="evidence" value="ECO:0007669"/>
    <property type="project" value="InterPro"/>
</dbReference>
<dbReference type="GO" id="GO:0017000">
    <property type="term" value="P:antibiotic biosynthetic process"/>
    <property type="evidence" value="ECO:0007669"/>
    <property type="project" value="UniProtKB-KW"/>
</dbReference>
<dbReference type="GO" id="GO:0032259">
    <property type="term" value="P:methylation"/>
    <property type="evidence" value="ECO:0007669"/>
    <property type="project" value="UniProtKB-KW"/>
</dbReference>
<dbReference type="CDD" id="cd02440">
    <property type="entry name" value="AdoMet_MTases"/>
    <property type="match status" value="1"/>
</dbReference>
<dbReference type="Gene3D" id="3.40.50.150">
    <property type="entry name" value="Vaccinia Virus protein VP39"/>
    <property type="match status" value="1"/>
</dbReference>
<dbReference type="InterPro" id="IPR050447">
    <property type="entry name" value="Erg6_SMT_methyltransf"/>
</dbReference>
<dbReference type="InterPro" id="IPR020803">
    <property type="entry name" value="MeTfrase_dom"/>
</dbReference>
<dbReference type="InterPro" id="IPR013216">
    <property type="entry name" value="Methyltransf_11"/>
</dbReference>
<dbReference type="InterPro" id="IPR029063">
    <property type="entry name" value="SAM-dependent_MTases_sf"/>
</dbReference>
<dbReference type="PANTHER" id="PTHR44068:SF11">
    <property type="entry name" value="GERANYL DIPHOSPHATE 2-C-METHYLTRANSFERASE"/>
    <property type="match status" value="1"/>
</dbReference>
<dbReference type="PANTHER" id="PTHR44068">
    <property type="entry name" value="ZGC:194242"/>
    <property type="match status" value="1"/>
</dbReference>
<dbReference type="Pfam" id="PF08241">
    <property type="entry name" value="Methyltransf_11"/>
    <property type="match status" value="1"/>
</dbReference>
<dbReference type="SMART" id="SM00828">
    <property type="entry name" value="PKS_MT"/>
    <property type="match status" value="1"/>
</dbReference>
<dbReference type="SUPFAM" id="SSF53335">
    <property type="entry name" value="S-adenosyl-L-methionine-dependent methyltransferases"/>
    <property type="match status" value="1"/>
</dbReference>
<feature type="chain" id="PRO_0000435820" description="27-O-demethylrifamycin SV methyltransferase">
    <location>
        <begin position="1"/>
        <end position="272"/>
    </location>
</feature>
<feature type="binding site" evidence="1">
    <location>
        <position position="89"/>
    </location>
    <ligand>
        <name>S-adenosyl-L-methionine</name>
        <dbReference type="ChEBI" id="CHEBI:59789"/>
    </ligand>
</feature>
<feature type="binding site" evidence="1">
    <location>
        <position position="94"/>
    </location>
    <ligand>
        <name>S-adenosyl-L-methionine</name>
        <dbReference type="ChEBI" id="CHEBI:59789"/>
    </ligand>
</feature>
<feature type="binding site" evidence="1">
    <location>
        <begin position="117"/>
        <end position="118"/>
    </location>
    <ligand>
        <name>S-adenosyl-L-methionine</name>
        <dbReference type="ChEBI" id="CHEBI:59789"/>
    </ligand>
</feature>
<feature type="binding site" evidence="1">
    <location>
        <position position="134"/>
    </location>
    <ligand>
        <name>S-adenosyl-L-methionine</name>
        <dbReference type="ChEBI" id="CHEBI:59789"/>
    </ligand>
</feature>
<feature type="binding site" evidence="1">
    <location>
        <position position="139"/>
    </location>
    <ligand>
        <name>S-adenosyl-L-methionine</name>
        <dbReference type="ChEBI" id="CHEBI:59789"/>
    </ligand>
</feature>
<feature type="sequence conflict" description="In Ref. 1; AAC01738." evidence="4" ref="1">
    <original>L</original>
    <variation>F</variation>
    <location>
        <position position="23"/>
    </location>
</feature>
<comment type="function">
    <text evidence="2">Catalyzes the methylation of 27-O-demethylrifamycin SV (DMRSV) to rifamycin SV.</text>
</comment>
<comment type="catalytic activity">
    <reaction evidence="2">
        <text>27-O-demethylrifamycin SV + S-adenosyl-L-methionine = rifamycin SV + S-adenosyl-L-homocysteine + H(+)</text>
        <dbReference type="Rhea" id="RHEA:44740"/>
        <dbReference type="ChEBI" id="CHEBI:15378"/>
        <dbReference type="ChEBI" id="CHEBI:57856"/>
        <dbReference type="ChEBI" id="CHEBI:59789"/>
        <dbReference type="ChEBI" id="CHEBI:84571"/>
        <dbReference type="ChEBI" id="CHEBI:84572"/>
        <dbReference type="EC" id="2.1.1.315"/>
    </reaction>
</comment>
<comment type="activity regulation">
    <text evidence="2">Slightly inhibited by Ca(2+) and Mg(2+). Strongly inhibited by Zn(2+), Ni(2+) and Co(2+).</text>
</comment>
<comment type="biophysicochemical properties">
    <kinetics>
        <KM evidence="2">18 uM for 27-O-demethylrifamycin SV</KM>
        <KM evidence="2">19.3 uM for S-adenosyl-L-methionine</KM>
        <text evidence="2">kcat is 87 sec(-1).</text>
    </kinetics>
    <phDependence>
        <text evidence="2">Optimum pH is 7.5-8.0.</text>
    </phDependence>
</comment>
<comment type="pathway">
    <text evidence="2">Antibiotic biosynthesis; rifamycin B biosynthesis.</text>
</comment>
<comment type="subunit">
    <text evidence="2">Exists probably as a trimer.</text>
</comment>
<comment type="disruption phenotype">
    <text evidence="2">Mutant loses its ability to produce rifamycin B, but accumulates 27-O-demethylrifamycin SV (DMRSV) as the major new metabolite, together with a small quantity of 27-O-demethyl-25-O-desacetylrifamycin SV (DMDARSV).</text>
</comment>
<comment type="similarity">
    <text evidence="4">Belongs to the class I-like SAM-binding methyltransferase superfamily.</text>
</comment>